<dbReference type="EC" id="1.7.1.15"/>
<dbReference type="EMBL" id="AE006468">
    <property type="protein sequence ID" value="AAL22337.1"/>
    <property type="molecule type" value="Genomic_DNA"/>
</dbReference>
<dbReference type="EMBL" id="M64606">
    <property type="status" value="NOT_ANNOTATED_CDS"/>
    <property type="molecule type" value="Genomic_DNA"/>
</dbReference>
<dbReference type="RefSeq" id="NP_462378.1">
    <property type="nucleotide sequence ID" value="NC_003197.2"/>
</dbReference>
<dbReference type="RefSeq" id="WP_000084814.1">
    <property type="nucleotide sequence ID" value="NC_003197.2"/>
</dbReference>
<dbReference type="SMR" id="P0A229"/>
<dbReference type="STRING" id="99287.STM3475"/>
<dbReference type="PaxDb" id="99287-STM3475"/>
<dbReference type="GeneID" id="1254998"/>
<dbReference type="KEGG" id="stm:STM3475"/>
<dbReference type="PATRIC" id="fig|99287.12.peg.3673"/>
<dbReference type="HOGENOM" id="CLU_055690_3_0_6"/>
<dbReference type="OMA" id="IDNRDPF"/>
<dbReference type="PhylomeDB" id="P0A229"/>
<dbReference type="BioCyc" id="SENT99287:STM3475-MONOMER"/>
<dbReference type="Proteomes" id="UP000001014">
    <property type="component" value="Chromosome"/>
</dbReference>
<dbReference type="GO" id="GO:0005737">
    <property type="term" value="C:cytoplasm"/>
    <property type="evidence" value="ECO:0007669"/>
    <property type="project" value="UniProtKB-SubCell"/>
</dbReference>
<dbReference type="GO" id="GO:0009344">
    <property type="term" value="C:nitrite reductase complex [NAD(P)H]"/>
    <property type="evidence" value="ECO:0000318"/>
    <property type="project" value="GO_Central"/>
</dbReference>
<dbReference type="GO" id="GO:0051537">
    <property type="term" value="F:2 iron, 2 sulfur cluster binding"/>
    <property type="evidence" value="ECO:0007669"/>
    <property type="project" value="InterPro"/>
</dbReference>
<dbReference type="GO" id="GO:0106316">
    <property type="term" value="F:nitrite reductase NADH activity"/>
    <property type="evidence" value="ECO:0007669"/>
    <property type="project" value="UniProtKB-EC"/>
</dbReference>
<dbReference type="GO" id="GO:0042128">
    <property type="term" value="P:nitrate assimilation"/>
    <property type="evidence" value="ECO:0007669"/>
    <property type="project" value="UniProtKB-KW"/>
</dbReference>
<dbReference type="CDD" id="cd03529">
    <property type="entry name" value="Rieske_NirD"/>
    <property type="match status" value="1"/>
</dbReference>
<dbReference type="FunFam" id="2.102.10.10:FF:000002">
    <property type="entry name" value="Nitrite reductase [NAD(P)H] small subunit"/>
    <property type="match status" value="1"/>
</dbReference>
<dbReference type="Gene3D" id="2.102.10.10">
    <property type="entry name" value="Rieske [2Fe-2S] iron-sulphur domain"/>
    <property type="match status" value="1"/>
</dbReference>
<dbReference type="InterPro" id="IPR017881">
    <property type="entry name" value="NirD"/>
</dbReference>
<dbReference type="InterPro" id="IPR012748">
    <property type="entry name" value="Rieske-like_NirD"/>
</dbReference>
<dbReference type="InterPro" id="IPR036922">
    <property type="entry name" value="Rieske_2Fe-2S_sf"/>
</dbReference>
<dbReference type="NCBIfam" id="TIGR02378">
    <property type="entry name" value="nirD_assim_sml"/>
    <property type="match status" value="1"/>
</dbReference>
<dbReference type="NCBIfam" id="NF007066">
    <property type="entry name" value="PRK09511.1"/>
    <property type="match status" value="1"/>
</dbReference>
<dbReference type="PANTHER" id="PTHR40562">
    <property type="match status" value="1"/>
</dbReference>
<dbReference type="PANTHER" id="PTHR40562:SF1">
    <property type="entry name" value="NITRITE REDUCTASE (NADH) SMALL SUBUNIT"/>
    <property type="match status" value="1"/>
</dbReference>
<dbReference type="Pfam" id="PF13806">
    <property type="entry name" value="Rieske_2"/>
    <property type="match status" value="1"/>
</dbReference>
<dbReference type="SUPFAM" id="SSF50022">
    <property type="entry name" value="ISP domain"/>
    <property type="match status" value="1"/>
</dbReference>
<dbReference type="PROSITE" id="PS51300">
    <property type="entry name" value="NIRD"/>
    <property type="match status" value="1"/>
</dbReference>
<reference key="1">
    <citation type="journal article" date="2001" name="Nature">
        <title>Complete genome sequence of Salmonella enterica serovar Typhimurium LT2.</title>
        <authorList>
            <person name="McClelland M."/>
            <person name="Sanderson K.E."/>
            <person name="Spieth J."/>
            <person name="Clifton S.W."/>
            <person name="Latreille P."/>
            <person name="Courtney L."/>
            <person name="Porwollik S."/>
            <person name="Ali J."/>
            <person name="Dante M."/>
            <person name="Du F."/>
            <person name="Hou S."/>
            <person name="Layman D."/>
            <person name="Leonard S."/>
            <person name="Nguyen C."/>
            <person name="Scott K."/>
            <person name="Holmes A."/>
            <person name="Grewal N."/>
            <person name="Mulvaney E."/>
            <person name="Ryan E."/>
            <person name="Sun H."/>
            <person name="Florea L."/>
            <person name="Miller W."/>
            <person name="Stoneking T."/>
            <person name="Nhan M."/>
            <person name="Waterston R."/>
            <person name="Wilson R.K."/>
        </authorList>
    </citation>
    <scope>NUCLEOTIDE SEQUENCE [LARGE SCALE GENOMIC DNA]</scope>
    <source>
        <strain>LT2 / SGSC1412 / ATCC 700720</strain>
    </source>
</reference>
<reference key="2">
    <citation type="journal article" date="1991" name="J. Bacteriol.">
        <title>High-level expression of Escherichia coli NADPH-sulfite reductase: requirement for a cloned cysG plasmid to overcome limiting siroheme cofactor.</title>
        <authorList>
            <person name="Wu J.Y."/>
            <person name="Siegel L.M."/>
            <person name="Kredich N.M."/>
        </authorList>
    </citation>
    <scope>NUCLEOTIDE SEQUENCE [GENOMIC DNA] OF 42-108</scope>
    <source>
        <strain>LT2</strain>
    </source>
</reference>
<accession>P0A229</accession>
<accession>P40789</accession>
<evidence type="ECO:0000305" key="1"/>
<name>NIRD_SALTY</name>
<comment type="function">
    <text>Required for activity of the reductase.</text>
</comment>
<comment type="catalytic activity">
    <reaction>
        <text>NH4(+) + 3 NAD(+) + 2 H2O = nitrite + 3 NADH + 5 H(+)</text>
        <dbReference type="Rhea" id="RHEA:24628"/>
        <dbReference type="ChEBI" id="CHEBI:15377"/>
        <dbReference type="ChEBI" id="CHEBI:15378"/>
        <dbReference type="ChEBI" id="CHEBI:16301"/>
        <dbReference type="ChEBI" id="CHEBI:28938"/>
        <dbReference type="ChEBI" id="CHEBI:57540"/>
        <dbReference type="ChEBI" id="CHEBI:57945"/>
        <dbReference type="EC" id="1.7.1.15"/>
    </reaction>
</comment>
<comment type="subunit">
    <text>Associates with NirB.</text>
</comment>
<comment type="subcellular location">
    <subcellularLocation>
        <location>Cytoplasm</location>
    </subcellularLocation>
</comment>
<feature type="chain" id="PRO_0000096857" description="Nitrite reductase (NADH) small subunit">
    <location>
        <begin position="1"/>
        <end position="108"/>
    </location>
</feature>
<feature type="sequence conflict" description="In Ref. 2." evidence="1" ref="2">
    <original>R</original>
    <variation>P</variation>
    <location>
        <position position="76"/>
    </location>
</feature>
<keyword id="KW-0963">Cytoplasm</keyword>
<keyword id="KW-0520">NAD</keyword>
<keyword id="KW-0534">Nitrate assimilation</keyword>
<keyword id="KW-0560">Oxidoreductase</keyword>
<keyword id="KW-1185">Reference proteome</keyword>
<sequence>MSQWQNICKIDDILPGTGVCALSGGEQVAIFRPYHSDQVFAISNIDPFFEASVLSRGLIAEHQGELWVASPLKKQRFRLSDGLCMEDEQFSVKHYDARVKDGVVQLRG</sequence>
<gene>
    <name type="primary">nirD</name>
    <name type="ordered locus">STM3475</name>
</gene>
<protein>
    <recommendedName>
        <fullName>Nitrite reductase (NADH) small subunit</fullName>
        <ecNumber>1.7.1.15</ecNumber>
    </recommendedName>
</protein>
<organism>
    <name type="scientific">Salmonella typhimurium (strain LT2 / SGSC1412 / ATCC 700720)</name>
    <dbReference type="NCBI Taxonomy" id="99287"/>
    <lineage>
        <taxon>Bacteria</taxon>
        <taxon>Pseudomonadati</taxon>
        <taxon>Pseudomonadota</taxon>
        <taxon>Gammaproteobacteria</taxon>
        <taxon>Enterobacterales</taxon>
        <taxon>Enterobacteriaceae</taxon>
        <taxon>Salmonella</taxon>
    </lineage>
</organism>
<proteinExistence type="predicted"/>